<accession>B3U538</accession>
<proteinExistence type="evidence at transcript level"/>
<sequence>MNKYFTCYVVASLFFSGCTVQHNLINETQSQIVQGHNQVIHQYFDEKNTSGVLVIQTDKKINLYGNALSRANTEYVPASTFKMLNALIGLENQKTDINEIFKWKGEKRSFTTWEKDMTLGEAMKLSAVPVYQELARRIGLDLMQKEVERIDFGNAEIGQQVDNFWLIGPLKVTPIQEVEFVSQLAHTQLPFSEKVQANVKNMLLLEENNGYKIFGKTGWAMDIKPQVGWLTGWVEQPDGKIVAFALNMEMRSEMPASIRNELLMKSLKQLNII</sequence>
<dbReference type="EC" id="3.5.2.6" evidence="4"/>
<dbReference type="EMBL" id="EU571228">
    <property type="protein sequence ID" value="ACE63186.1"/>
    <property type="molecule type" value="Genomic_DNA"/>
</dbReference>
<dbReference type="RefSeq" id="WP_063861038.1">
    <property type="nucleotide sequence ID" value="NG_049433.1"/>
</dbReference>
<dbReference type="SMR" id="B3U538"/>
<dbReference type="STRING" id="40216.GCA_001917365_00414"/>
<dbReference type="CARD" id="ARO:3001702">
    <property type="molecule name" value="OXA-133"/>
    <property type="mechanism identifier" value="ARO:0001004"/>
    <property type="mechanism name" value="antibiotic inactivation"/>
</dbReference>
<dbReference type="KEGG" id="ag:ACE63186"/>
<dbReference type="GO" id="GO:0005886">
    <property type="term" value="C:plasma membrane"/>
    <property type="evidence" value="ECO:0007669"/>
    <property type="project" value="UniProtKB-SubCell"/>
</dbReference>
<dbReference type="GO" id="GO:0008800">
    <property type="term" value="F:beta-lactamase activity"/>
    <property type="evidence" value="ECO:0007669"/>
    <property type="project" value="UniProtKB-EC"/>
</dbReference>
<dbReference type="GO" id="GO:0008658">
    <property type="term" value="F:penicillin binding"/>
    <property type="evidence" value="ECO:0007669"/>
    <property type="project" value="InterPro"/>
</dbReference>
<dbReference type="GO" id="GO:0071555">
    <property type="term" value="P:cell wall organization"/>
    <property type="evidence" value="ECO:0007669"/>
    <property type="project" value="TreeGrafter"/>
</dbReference>
<dbReference type="GO" id="GO:0046677">
    <property type="term" value="P:response to antibiotic"/>
    <property type="evidence" value="ECO:0007669"/>
    <property type="project" value="UniProtKB-KW"/>
</dbReference>
<dbReference type="Gene3D" id="3.40.710.10">
    <property type="entry name" value="DD-peptidase/beta-lactamase superfamily"/>
    <property type="match status" value="1"/>
</dbReference>
<dbReference type="InterPro" id="IPR050515">
    <property type="entry name" value="Bact_Transpept/Beta-Lactamase"/>
</dbReference>
<dbReference type="InterPro" id="IPR012338">
    <property type="entry name" value="Beta-lactam/transpept-like"/>
</dbReference>
<dbReference type="InterPro" id="IPR001460">
    <property type="entry name" value="PCN-bd_Tpept"/>
</dbReference>
<dbReference type="NCBIfam" id="NF012161">
    <property type="entry name" value="bla_class_D_main"/>
    <property type="match status" value="1"/>
</dbReference>
<dbReference type="NCBIfam" id="NF000266">
    <property type="entry name" value="blaOXA-23_like"/>
    <property type="match status" value="1"/>
</dbReference>
<dbReference type="PANTHER" id="PTHR30627:SF6">
    <property type="entry name" value="BETA-LACTAMASE YBXI-RELATED"/>
    <property type="match status" value="1"/>
</dbReference>
<dbReference type="PANTHER" id="PTHR30627">
    <property type="entry name" value="PEPTIDOGLYCAN D,D-TRANSPEPTIDASE"/>
    <property type="match status" value="1"/>
</dbReference>
<dbReference type="Pfam" id="PF00905">
    <property type="entry name" value="Transpeptidase"/>
    <property type="match status" value="1"/>
</dbReference>
<dbReference type="SUPFAM" id="SSF56601">
    <property type="entry name" value="beta-lactamase/transpeptidase-like"/>
    <property type="match status" value="1"/>
</dbReference>
<dbReference type="PROSITE" id="PS51257">
    <property type="entry name" value="PROKAR_LIPOPROTEIN"/>
    <property type="match status" value="1"/>
</dbReference>
<protein>
    <recommendedName>
        <fullName evidence="8">Beta-lactamase OXA-133</fullName>
        <ecNumber evidence="4">3.5.2.6</ecNumber>
    </recommendedName>
    <alternativeName>
        <fullName evidence="7">BlaOXA-23-like protein</fullName>
    </alternativeName>
</protein>
<comment type="function">
    <text evidence="4 7">Catalyzes the hydrolysis of beta-lactam antibiotics.</text>
</comment>
<comment type="catalytic activity">
    <reaction evidence="4">
        <text>a beta-lactam + H2O = a substituted beta-amino acid</text>
        <dbReference type="Rhea" id="RHEA:20401"/>
        <dbReference type="ChEBI" id="CHEBI:15377"/>
        <dbReference type="ChEBI" id="CHEBI:35627"/>
        <dbReference type="ChEBI" id="CHEBI:140347"/>
        <dbReference type="EC" id="3.5.2.6"/>
    </reaction>
</comment>
<comment type="subcellular location">
    <subcellularLocation>
        <location evidence="5">Cell membrane</location>
        <topology evidence="5">Lipid-anchor</topology>
    </subcellularLocation>
</comment>
<comment type="induction">
    <text evidence="6">Is transcribed at very low levels, about 1,500-fold lower than those for blaOXA-58.</text>
</comment>
<comment type="similarity">
    <text evidence="8">Belongs to the class-D beta-lactamase family.</text>
</comment>
<name>BL133_ACIRA</name>
<reference key="1">
    <citation type="journal article" date="2009" name="Antimicrob. Agents Chemother.">
        <title>Codetection of blaOXA-23-like gene (blaOXA-133) and blaOXA-58 in Acinetobacter radioresistens: report from the SENTRY antimicrobial surveillance program.</title>
        <authorList>
            <person name="Mendes R.E."/>
            <person name="Bell J.M."/>
            <person name="Turnidge J.D."/>
            <person name="Castanheira M."/>
            <person name="Deshpande L.M."/>
            <person name="Jones R.N."/>
        </authorList>
    </citation>
    <scope>NUCLEOTIDE SEQUENCE [GENOMIC DNA]</scope>
    <scope>INDUCTION</scope>
    <scope>FUNCTION</scope>
    <source>
        <strain>251-39C</strain>
    </source>
</reference>
<gene>
    <name evidence="7" type="primary">blaOXA-133</name>
</gene>
<organism>
    <name type="scientific">Acinetobacter radioresistens</name>
    <dbReference type="NCBI Taxonomy" id="40216"/>
    <lineage>
        <taxon>Bacteria</taxon>
        <taxon>Pseudomonadati</taxon>
        <taxon>Pseudomonadota</taxon>
        <taxon>Gammaproteobacteria</taxon>
        <taxon>Moraxellales</taxon>
        <taxon>Moraxellaceae</taxon>
        <taxon>Acinetobacter</taxon>
    </lineage>
</organism>
<feature type="signal peptide" evidence="5">
    <location>
        <begin position="1"/>
        <end position="17"/>
    </location>
</feature>
<feature type="chain" id="PRO_0000430517" description="Beta-lactamase OXA-133">
    <location>
        <begin position="18"/>
        <end position="273"/>
    </location>
</feature>
<feature type="active site" description="Acyl-ester intermediate" evidence="3">
    <location>
        <position position="79"/>
    </location>
</feature>
<feature type="binding site" evidence="1">
    <location>
        <begin position="216"/>
        <end position="218"/>
    </location>
    <ligand>
        <name>substrate</name>
    </ligand>
</feature>
<feature type="modified residue" description="N6-carboxylysine" evidence="2">
    <location>
        <position position="82"/>
    </location>
</feature>
<feature type="lipid moiety-binding region" description="N-palmitoyl cysteine" evidence="5">
    <location>
        <position position="18"/>
    </location>
</feature>
<feature type="lipid moiety-binding region" description="S-diacylglycerol cysteine" evidence="5">
    <location>
        <position position="18"/>
    </location>
</feature>
<keyword id="KW-0046">Antibiotic resistance</keyword>
<keyword id="KW-1003">Cell membrane</keyword>
<keyword id="KW-0378">Hydrolase</keyword>
<keyword id="KW-0449">Lipoprotein</keyword>
<keyword id="KW-0472">Membrane</keyword>
<keyword id="KW-0564">Palmitate</keyword>
<keyword id="KW-0732">Signal</keyword>
<evidence type="ECO:0000250" key="1"/>
<evidence type="ECO:0000250" key="2">
    <source>
        <dbReference type="UniProtKB" id="P14489"/>
    </source>
</evidence>
<evidence type="ECO:0000250" key="3">
    <source>
        <dbReference type="UniProtKB" id="P14559"/>
    </source>
</evidence>
<evidence type="ECO:0000250" key="4">
    <source>
        <dbReference type="UniProtKB" id="Q51574"/>
    </source>
</evidence>
<evidence type="ECO:0000255" key="5">
    <source>
        <dbReference type="PROSITE-ProRule" id="PRU00303"/>
    </source>
</evidence>
<evidence type="ECO:0000269" key="6">
    <source>
    </source>
</evidence>
<evidence type="ECO:0000303" key="7">
    <source>
    </source>
</evidence>
<evidence type="ECO:0000305" key="8"/>